<dbReference type="EMBL" id="CR626927">
    <property type="protein sequence ID" value="CAH09666.1"/>
    <property type="molecule type" value="Genomic_DNA"/>
</dbReference>
<dbReference type="RefSeq" id="WP_005791558.1">
    <property type="nucleotide sequence ID" value="NZ_UFTH01000001.1"/>
</dbReference>
<dbReference type="SMR" id="Q5L8C2"/>
<dbReference type="PaxDb" id="272559-BF9343_3885"/>
<dbReference type="GeneID" id="60368252"/>
<dbReference type="KEGG" id="bfs:BF9343_3885"/>
<dbReference type="eggNOG" id="COG0199">
    <property type="taxonomic scope" value="Bacteria"/>
</dbReference>
<dbReference type="HOGENOM" id="CLU_139869_0_1_10"/>
<dbReference type="Proteomes" id="UP000006731">
    <property type="component" value="Chromosome"/>
</dbReference>
<dbReference type="GO" id="GO:0005737">
    <property type="term" value="C:cytoplasm"/>
    <property type="evidence" value="ECO:0007669"/>
    <property type="project" value="UniProtKB-ARBA"/>
</dbReference>
<dbReference type="GO" id="GO:0015935">
    <property type="term" value="C:small ribosomal subunit"/>
    <property type="evidence" value="ECO:0007669"/>
    <property type="project" value="TreeGrafter"/>
</dbReference>
<dbReference type="GO" id="GO:0019843">
    <property type="term" value="F:rRNA binding"/>
    <property type="evidence" value="ECO:0007669"/>
    <property type="project" value="UniProtKB-UniRule"/>
</dbReference>
<dbReference type="GO" id="GO:0003735">
    <property type="term" value="F:structural constituent of ribosome"/>
    <property type="evidence" value="ECO:0007669"/>
    <property type="project" value="InterPro"/>
</dbReference>
<dbReference type="GO" id="GO:0006412">
    <property type="term" value="P:translation"/>
    <property type="evidence" value="ECO:0007669"/>
    <property type="project" value="UniProtKB-UniRule"/>
</dbReference>
<dbReference type="FunFam" id="1.10.287.1480:FF:000001">
    <property type="entry name" value="30S ribosomal protein S14"/>
    <property type="match status" value="1"/>
</dbReference>
<dbReference type="Gene3D" id="1.10.287.1480">
    <property type="match status" value="1"/>
</dbReference>
<dbReference type="HAMAP" id="MF_00537">
    <property type="entry name" value="Ribosomal_uS14_1"/>
    <property type="match status" value="1"/>
</dbReference>
<dbReference type="InterPro" id="IPR001209">
    <property type="entry name" value="Ribosomal_uS14"/>
</dbReference>
<dbReference type="InterPro" id="IPR023036">
    <property type="entry name" value="Ribosomal_uS14_bac/plastid"/>
</dbReference>
<dbReference type="InterPro" id="IPR018271">
    <property type="entry name" value="Ribosomal_uS14_CS"/>
</dbReference>
<dbReference type="NCBIfam" id="NF006477">
    <property type="entry name" value="PRK08881.1"/>
    <property type="match status" value="1"/>
</dbReference>
<dbReference type="PANTHER" id="PTHR19836">
    <property type="entry name" value="30S RIBOSOMAL PROTEIN S14"/>
    <property type="match status" value="1"/>
</dbReference>
<dbReference type="PANTHER" id="PTHR19836:SF19">
    <property type="entry name" value="SMALL RIBOSOMAL SUBUNIT PROTEIN US14M"/>
    <property type="match status" value="1"/>
</dbReference>
<dbReference type="Pfam" id="PF00253">
    <property type="entry name" value="Ribosomal_S14"/>
    <property type="match status" value="1"/>
</dbReference>
<dbReference type="SUPFAM" id="SSF57716">
    <property type="entry name" value="Glucocorticoid receptor-like (DNA-binding domain)"/>
    <property type="match status" value="1"/>
</dbReference>
<dbReference type="PROSITE" id="PS00527">
    <property type="entry name" value="RIBOSOMAL_S14"/>
    <property type="match status" value="1"/>
</dbReference>
<comment type="function">
    <text evidence="1">Binds 16S rRNA, required for the assembly of 30S particles and may also be responsible for determining the conformation of the 16S rRNA at the A site.</text>
</comment>
<comment type="subunit">
    <text evidence="1">Part of the 30S ribosomal subunit. Contacts proteins S3 and S10.</text>
</comment>
<comment type="similarity">
    <text evidence="1">Belongs to the universal ribosomal protein uS14 family.</text>
</comment>
<sequence>MAKESMKAREIKRAKLVAKYAEKRAALKQIVRTGDPAEAFEAAQKLQELPKNSNPIRMHNRCKLTGRPKGYIRQFGVSRIQFREMASNGLIPGVKKASW</sequence>
<gene>
    <name evidence="1" type="primary">rpsN</name>
    <name type="ordered locus">BF3990</name>
</gene>
<proteinExistence type="inferred from homology"/>
<name>RS14_BACFN</name>
<keyword id="KW-0687">Ribonucleoprotein</keyword>
<keyword id="KW-0689">Ribosomal protein</keyword>
<keyword id="KW-0694">RNA-binding</keyword>
<keyword id="KW-0699">rRNA-binding</keyword>
<feature type="chain" id="PRO_1000128302" description="Small ribosomal subunit protein uS14">
    <location>
        <begin position="1"/>
        <end position="99"/>
    </location>
</feature>
<accession>Q5L8C2</accession>
<evidence type="ECO:0000255" key="1">
    <source>
        <dbReference type="HAMAP-Rule" id="MF_00537"/>
    </source>
</evidence>
<evidence type="ECO:0000305" key="2"/>
<protein>
    <recommendedName>
        <fullName evidence="1">Small ribosomal subunit protein uS14</fullName>
    </recommendedName>
    <alternativeName>
        <fullName evidence="2">30S ribosomal protein S14</fullName>
    </alternativeName>
</protein>
<organism>
    <name type="scientific">Bacteroides fragilis (strain ATCC 25285 / DSM 2151 / CCUG 4856 / JCM 11019 / LMG 10263 / NCTC 9343 / Onslow / VPI 2553 / EN-2)</name>
    <dbReference type="NCBI Taxonomy" id="272559"/>
    <lineage>
        <taxon>Bacteria</taxon>
        <taxon>Pseudomonadati</taxon>
        <taxon>Bacteroidota</taxon>
        <taxon>Bacteroidia</taxon>
        <taxon>Bacteroidales</taxon>
        <taxon>Bacteroidaceae</taxon>
        <taxon>Bacteroides</taxon>
    </lineage>
</organism>
<reference key="1">
    <citation type="journal article" date="2005" name="Science">
        <title>Extensive DNA inversions in the B. fragilis genome control variable gene expression.</title>
        <authorList>
            <person name="Cerdeno-Tarraga A.-M."/>
            <person name="Patrick S."/>
            <person name="Crossman L.C."/>
            <person name="Blakely G."/>
            <person name="Abratt V."/>
            <person name="Lennard N."/>
            <person name="Poxton I."/>
            <person name="Duerden B."/>
            <person name="Harris B."/>
            <person name="Quail M.A."/>
            <person name="Barron A."/>
            <person name="Clark L."/>
            <person name="Corton C."/>
            <person name="Doggett J."/>
            <person name="Holden M.T.G."/>
            <person name="Larke N."/>
            <person name="Line A."/>
            <person name="Lord A."/>
            <person name="Norbertczak H."/>
            <person name="Ormond D."/>
            <person name="Price C."/>
            <person name="Rabbinowitsch E."/>
            <person name="Woodward J."/>
            <person name="Barrell B.G."/>
            <person name="Parkhill J."/>
        </authorList>
    </citation>
    <scope>NUCLEOTIDE SEQUENCE [LARGE SCALE GENOMIC DNA]</scope>
    <source>
        <strain>ATCC 25285 / DSM 2151 / CCUG 4856 / JCM 11019 / LMG 10263 / NCTC 9343 / Onslow / VPI 2553 / EN-2</strain>
    </source>
</reference>